<protein>
    <recommendedName>
        <fullName evidence="9">Non-specific lipid transfer protein GPI-anchored 15</fullName>
        <shortName evidence="9">AtLTPG-15</shortName>
        <shortName evidence="9">Protein LTP-GPI-ANCHORED 15</shortName>
    </recommendedName>
    <alternativeName>
        <fullName evidence="8">Xylogen-like protein 10</fullName>
        <shortName evidence="8">AtXYLP11</shortName>
        <shortName evidence="8">AtXYP7</shortName>
    </alternativeName>
</protein>
<evidence type="ECO:0000250" key="1">
    <source>
        <dbReference type="UniProtKB" id="A0A0B4JDK1"/>
    </source>
</evidence>
<evidence type="ECO:0000250" key="2">
    <source>
        <dbReference type="UniProtKB" id="Q9C7F7"/>
    </source>
</evidence>
<evidence type="ECO:0000255" key="3"/>
<evidence type="ECO:0000255" key="4">
    <source>
        <dbReference type="PROSITE-ProRule" id="PRU00498"/>
    </source>
</evidence>
<evidence type="ECO:0000256" key="5">
    <source>
        <dbReference type="SAM" id="MobiDB-lite"/>
    </source>
</evidence>
<evidence type="ECO:0000269" key="6">
    <source>
    </source>
</evidence>
<evidence type="ECO:0000269" key="7">
    <source>
    </source>
</evidence>
<evidence type="ECO:0000303" key="8">
    <source>
    </source>
</evidence>
<evidence type="ECO:0000303" key="9">
    <source>
    </source>
</evidence>
<evidence type="ECO:0000305" key="10"/>
<evidence type="ECO:0000312" key="11">
    <source>
        <dbReference type="Araport" id="AT2G48130"/>
    </source>
</evidence>
<evidence type="ECO:0000312" key="12">
    <source>
        <dbReference type="EMBL" id="AEC10943.1"/>
    </source>
</evidence>
<proteinExistence type="evidence at transcript level"/>
<comment type="function">
    <text evidence="2">Probable lipid transfer protein.</text>
</comment>
<comment type="subcellular location">
    <subcellularLocation>
        <location evidence="3">Cell membrane</location>
        <topology evidence="3">Lipid-anchor</topology>
        <topology evidence="3">GPI-anchor</topology>
    </subcellularLocation>
</comment>
<comment type="tissue specificity">
    <text evidence="6 7">Expressed in seedlings, preferentially in the endodermis of hypocotyls and roots (PubMed:21558309, PubMed:23893219). Also observed in siliques (PubMed:23893219).</text>
</comment>
<comment type="developmental stage">
    <text evidence="6">In roots, restricted to the endodermis/pericycle above the middle of the differentiation zone and the regions where new lateral roots are emerging.</text>
</comment>
<comment type="similarity">
    <text evidence="10">Belongs to the plant LTP family.</text>
</comment>
<accession>Q7EB72</accession>
<accession>A0A178VVU1</accession>
<accession>Q8LBJ9</accession>
<name>LTG15_ARATH</name>
<keyword id="KW-1003">Cell membrane</keyword>
<keyword id="KW-1015">Disulfide bond</keyword>
<keyword id="KW-0325">Glycoprotein</keyword>
<keyword id="KW-0336">GPI-anchor</keyword>
<keyword id="KW-0449">Lipoprotein</keyword>
<keyword id="KW-0472">Membrane</keyword>
<keyword id="KW-1185">Reference proteome</keyword>
<keyword id="KW-0732">Signal</keyword>
<dbReference type="EMBL" id="AB246326">
    <property type="protein sequence ID" value="BAE73263.1"/>
    <property type="molecule type" value="mRNA"/>
</dbReference>
<dbReference type="EMBL" id="LR699746">
    <property type="status" value="NOT_ANNOTATED_CDS"/>
    <property type="molecule type" value="Genomic_DNA"/>
</dbReference>
<dbReference type="EMBL" id="CP002685">
    <property type="protein sequence ID" value="AEC10943.1"/>
    <property type="molecule type" value="Genomic_DNA"/>
</dbReference>
<dbReference type="EMBL" id="CP002685">
    <property type="protein sequence ID" value="ANM62793.1"/>
    <property type="molecule type" value="Genomic_DNA"/>
</dbReference>
<dbReference type="EMBL" id="CP002685">
    <property type="protein sequence ID" value="ANM62794.1"/>
    <property type="molecule type" value="Genomic_DNA"/>
</dbReference>
<dbReference type="EMBL" id="CP002685">
    <property type="protein sequence ID" value="ANM62795.1"/>
    <property type="molecule type" value="Genomic_DNA"/>
</dbReference>
<dbReference type="EMBL" id="CP002685">
    <property type="protein sequence ID" value="ANM62796.1"/>
    <property type="molecule type" value="Genomic_DNA"/>
</dbReference>
<dbReference type="EMBL" id="CP002685">
    <property type="protein sequence ID" value="ANM62797.1"/>
    <property type="molecule type" value="Genomic_DNA"/>
</dbReference>
<dbReference type="EMBL" id="AY065446">
    <property type="protein sequence ID" value="AAL38887.1"/>
    <property type="molecule type" value="mRNA"/>
</dbReference>
<dbReference type="EMBL" id="AY117278">
    <property type="protein sequence ID" value="AAM51353.1"/>
    <property type="molecule type" value="mRNA"/>
</dbReference>
<dbReference type="EMBL" id="AY087167">
    <property type="protein sequence ID" value="AAM64723.1"/>
    <property type="molecule type" value="mRNA"/>
</dbReference>
<dbReference type="PIR" id="G84923">
    <property type="entry name" value="G84923"/>
</dbReference>
<dbReference type="RefSeq" id="NP_001318446.1">
    <property type="nucleotide sequence ID" value="NM_001337297.1"/>
</dbReference>
<dbReference type="RefSeq" id="NP_001324923.1">
    <property type="nucleotide sequence ID" value="NM_001337301.1"/>
</dbReference>
<dbReference type="RefSeq" id="NP_001324924.1">
    <property type="nucleotide sequence ID" value="NM_001337300.1"/>
</dbReference>
<dbReference type="RefSeq" id="NP_001324925.1">
    <property type="nucleotide sequence ID" value="NM_001337299.1"/>
</dbReference>
<dbReference type="RefSeq" id="NP_001324926.1">
    <property type="nucleotide sequence ID" value="NM_001337298.1"/>
</dbReference>
<dbReference type="RefSeq" id="NP_566126.1">
    <property type="nucleotide sequence ID" value="NM_130380.3"/>
</dbReference>
<dbReference type="SMR" id="Q7EB72"/>
<dbReference type="STRING" id="3702.Q7EB72"/>
<dbReference type="GlyCosmos" id="Q7EB72">
    <property type="glycosylation" value="2 sites, No reported glycans"/>
</dbReference>
<dbReference type="GlyGen" id="Q7EB72">
    <property type="glycosylation" value="3 sites"/>
</dbReference>
<dbReference type="PaxDb" id="3702-AT2G48130.1"/>
<dbReference type="ProteomicsDB" id="185651"/>
<dbReference type="EnsemblPlants" id="AT2G48130.1">
    <property type="protein sequence ID" value="AT2G48130.1"/>
    <property type="gene ID" value="AT2G48130"/>
</dbReference>
<dbReference type="EnsemblPlants" id="AT2G48130.2">
    <property type="protein sequence ID" value="AT2G48130.2"/>
    <property type="gene ID" value="AT2G48130"/>
</dbReference>
<dbReference type="EnsemblPlants" id="AT2G48130.3">
    <property type="protein sequence ID" value="AT2G48130.3"/>
    <property type="gene ID" value="AT2G48130"/>
</dbReference>
<dbReference type="EnsemblPlants" id="AT2G48130.4">
    <property type="protein sequence ID" value="AT2G48130.4"/>
    <property type="gene ID" value="AT2G48130"/>
</dbReference>
<dbReference type="EnsemblPlants" id="AT2G48130.5">
    <property type="protein sequence ID" value="AT2G48130.5"/>
    <property type="gene ID" value="AT2G48130"/>
</dbReference>
<dbReference type="EnsemblPlants" id="AT2G48130.6">
    <property type="protein sequence ID" value="AT2G48130.6"/>
    <property type="gene ID" value="AT2G48130"/>
</dbReference>
<dbReference type="GeneID" id="819425"/>
<dbReference type="Gramene" id="AT2G48130.1">
    <property type="protein sequence ID" value="AT2G48130.1"/>
    <property type="gene ID" value="AT2G48130"/>
</dbReference>
<dbReference type="Gramene" id="AT2G48130.2">
    <property type="protein sequence ID" value="AT2G48130.2"/>
    <property type="gene ID" value="AT2G48130"/>
</dbReference>
<dbReference type="Gramene" id="AT2G48130.3">
    <property type="protein sequence ID" value="AT2G48130.3"/>
    <property type="gene ID" value="AT2G48130"/>
</dbReference>
<dbReference type="Gramene" id="AT2G48130.4">
    <property type="protein sequence ID" value="AT2G48130.4"/>
    <property type="gene ID" value="AT2G48130"/>
</dbReference>
<dbReference type="Gramene" id="AT2G48130.5">
    <property type="protein sequence ID" value="AT2G48130.5"/>
    <property type="gene ID" value="AT2G48130"/>
</dbReference>
<dbReference type="Gramene" id="AT2G48130.6">
    <property type="protein sequence ID" value="AT2G48130.6"/>
    <property type="gene ID" value="AT2G48130"/>
</dbReference>
<dbReference type="KEGG" id="ath:AT2G48130"/>
<dbReference type="Araport" id="AT2G48130"/>
<dbReference type="TAIR" id="AT2G48130">
    <property type="gene designation" value="LTPG15"/>
</dbReference>
<dbReference type="eggNOG" id="ENOG502S0AW">
    <property type="taxonomic scope" value="Eukaryota"/>
</dbReference>
<dbReference type="HOGENOM" id="CLU_089796_3_0_1"/>
<dbReference type="InParanoid" id="Q7EB72"/>
<dbReference type="OMA" id="LHFLMFA"/>
<dbReference type="PhylomeDB" id="Q7EB72"/>
<dbReference type="PRO" id="PR:Q7EB72"/>
<dbReference type="Proteomes" id="UP000006548">
    <property type="component" value="Chromosome 2"/>
</dbReference>
<dbReference type="ExpressionAtlas" id="Q7EB72">
    <property type="expression patterns" value="baseline and differential"/>
</dbReference>
<dbReference type="GO" id="GO:0005886">
    <property type="term" value="C:plasma membrane"/>
    <property type="evidence" value="ECO:0000314"/>
    <property type="project" value="TAIR"/>
</dbReference>
<dbReference type="GO" id="GO:0098552">
    <property type="term" value="C:side of membrane"/>
    <property type="evidence" value="ECO:0007669"/>
    <property type="project" value="UniProtKB-KW"/>
</dbReference>
<dbReference type="GO" id="GO:0008289">
    <property type="term" value="F:lipid binding"/>
    <property type="evidence" value="ECO:0007669"/>
    <property type="project" value="InterPro"/>
</dbReference>
<dbReference type="GO" id="GO:0005319">
    <property type="term" value="F:lipid transporter activity"/>
    <property type="evidence" value="ECO:0000315"/>
    <property type="project" value="TAIR"/>
</dbReference>
<dbReference type="GO" id="GO:0015908">
    <property type="term" value="P:fatty acid transport"/>
    <property type="evidence" value="ECO:0000315"/>
    <property type="project" value="TAIR"/>
</dbReference>
<dbReference type="GO" id="GO:0010214">
    <property type="term" value="P:seed coat development"/>
    <property type="evidence" value="ECO:0000315"/>
    <property type="project" value="TAIR"/>
</dbReference>
<dbReference type="GO" id="GO:0009845">
    <property type="term" value="P:seed germination"/>
    <property type="evidence" value="ECO:0000315"/>
    <property type="project" value="TAIR"/>
</dbReference>
<dbReference type="CDD" id="cd00010">
    <property type="entry name" value="AAI_LTSS"/>
    <property type="match status" value="1"/>
</dbReference>
<dbReference type="FunFam" id="1.10.110.10:FF:000001">
    <property type="entry name" value="Bifunctional inhibitor/lipid-transfer protein/seed storage 2S albumin superfamily protein"/>
    <property type="match status" value="1"/>
</dbReference>
<dbReference type="Gene3D" id="1.10.110.10">
    <property type="entry name" value="Plant lipid-transfer and hydrophobic proteins"/>
    <property type="match status" value="1"/>
</dbReference>
<dbReference type="InterPro" id="IPR036312">
    <property type="entry name" value="Bifun_inhib/LTP/seed_sf"/>
</dbReference>
<dbReference type="InterPro" id="IPR016140">
    <property type="entry name" value="Bifunc_inhib/LTP/seed_store"/>
</dbReference>
<dbReference type="InterPro" id="IPR043325">
    <property type="entry name" value="LTSS"/>
</dbReference>
<dbReference type="InterPro" id="IPR000528">
    <property type="entry name" value="Plant_nsLTP"/>
</dbReference>
<dbReference type="PANTHER" id="PTHR33044">
    <property type="entry name" value="BIFUNCTIONAL INHIBITOR/LIPID-TRANSFER PROTEIN/SEED STORAGE 2S ALBUMIN SUPERFAMILY PROTEIN-RELATED"/>
    <property type="match status" value="1"/>
</dbReference>
<dbReference type="Pfam" id="PF14368">
    <property type="entry name" value="LTP_2"/>
    <property type="match status" value="1"/>
</dbReference>
<dbReference type="PRINTS" id="PR00382">
    <property type="entry name" value="LIPIDTRNSFER"/>
</dbReference>
<dbReference type="SMART" id="SM00499">
    <property type="entry name" value="AAI"/>
    <property type="match status" value="1"/>
</dbReference>
<dbReference type="SUPFAM" id="SSF47699">
    <property type="entry name" value="Bifunctional inhibitor/lipid-transfer protein/seed storage 2S albumin"/>
    <property type="match status" value="1"/>
</dbReference>
<organism>
    <name type="scientific">Arabidopsis thaliana</name>
    <name type="common">Mouse-ear cress</name>
    <dbReference type="NCBI Taxonomy" id="3702"/>
    <lineage>
        <taxon>Eukaryota</taxon>
        <taxon>Viridiplantae</taxon>
        <taxon>Streptophyta</taxon>
        <taxon>Embryophyta</taxon>
        <taxon>Tracheophyta</taxon>
        <taxon>Spermatophyta</taxon>
        <taxon>Magnoliopsida</taxon>
        <taxon>eudicotyledons</taxon>
        <taxon>Gunneridae</taxon>
        <taxon>Pentapetalae</taxon>
        <taxon>rosids</taxon>
        <taxon>malvids</taxon>
        <taxon>Brassicales</taxon>
        <taxon>Brassicaceae</taxon>
        <taxon>Camelineae</taxon>
        <taxon>Arabidopsis</taxon>
    </lineage>
</organism>
<sequence>MGYRRSYAITFVALVAALWSVTKAQPSSSCVSTLTTLSPCLSYITGNSTTPSQPCCSRLDSVIKSSPQCICSAVNSPIPNIGLNINRTQALQLPNACNIQTPPLTQCNAATGPTAQPPAPSPTEKTPDVTLTPTSLPGARSGVGGGSKTVPSVGTGSSSRNVDPLPLHFLMFAVLVVCTSSFL</sequence>
<reference key="1">
    <citation type="journal article" date="2011" name="Plant Cell Physiol.">
        <title>Expression and genome-wide analysis of the xylogen-type gene family.</title>
        <authorList>
            <person name="Kobayashi Y."/>
            <person name="Motose H."/>
            <person name="Iwamoto K."/>
            <person name="Fukuda H."/>
        </authorList>
    </citation>
    <scope>NUCLEOTIDE SEQUENCE [MRNA]</scope>
    <scope>TISSUE SPECIFICITY</scope>
    <scope>DEVELOPMENTAL STAGE</scope>
    <scope>GENE FAMILY</scope>
    <scope>NOMENCLATURE</scope>
    <source>
        <strain>cv. Columbia</strain>
    </source>
</reference>
<reference key="2">
    <citation type="journal article" date="1999" name="Nature">
        <title>Sequence and analysis of chromosome 2 of the plant Arabidopsis thaliana.</title>
        <authorList>
            <person name="Lin X."/>
            <person name="Kaul S."/>
            <person name="Rounsley S.D."/>
            <person name="Shea T.P."/>
            <person name="Benito M.-I."/>
            <person name="Town C.D."/>
            <person name="Fujii C.Y."/>
            <person name="Mason T.M."/>
            <person name="Bowman C.L."/>
            <person name="Barnstead M.E."/>
            <person name="Feldblyum T.V."/>
            <person name="Buell C.R."/>
            <person name="Ketchum K.A."/>
            <person name="Lee J.J."/>
            <person name="Ronning C.M."/>
            <person name="Koo H.L."/>
            <person name="Moffat K.S."/>
            <person name="Cronin L.A."/>
            <person name="Shen M."/>
            <person name="Pai G."/>
            <person name="Van Aken S."/>
            <person name="Umayam L."/>
            <person name="Tallon L.J."/>
            <person name="Gill J.E."/>
            <person name="Adams M.D."/>
            <person name="Carrera A.J."/>
            <person name="Creasy T.H."/>
            <person name="Goodman H.M."/>
            <person name="Somerville C.R."/>
            <person name="Copenhaver G.P."/>
            <person name="Preuss D."/>
            <person name="Nierman W.C."/>
            <person name="White O."/>
            <person name="Eisen J.A."/>
            <person name="Salzberg S.L."/>
            <person name="Fraser C.M."/>
            <person name="Venter J.C."/>
        </authorList>
    </citation>
    <scope>NUCLEOTIDE SEQUENCE [LARGE SCALE GENOMIC DNA]</scope>
    <source>
        <strain>cv. Columbia</strain>
    </source>
</reference>
<reference key="3">
    <citation type="journal article" date="2017" name="Plant J.">
        <title>Araport11: a complete reannotation of the Arabidopsis thaliana reference genome.</title>
        <authorList>
            <person name="Cheng C.Y."/>
            <person name="Krishnakumar V."/>
            <person name="Chan A.P."/>
            <person name="Thibaud-Nissen F."/>
            <person name="Schobel S."/>
            <person name="Town C.D."/>
        </authorList>
    </citation>
    <scope>GENOME REANNOTATION</scope>
    <source>
        <strain>cv. Columbia</strain>
    </source>
</reference>
<reference key="4">
    <citation type="journal article" date="2003" name="Science">
        <title>Empirical analysis of transcriptional activity in the Arabidopsis genome.</title>
        <authorList>
            <person name="Yamada K."/>
            <person name="Lim J."/>
            <person name="Dale J.M."/>
            <person name="Chen H."/>
            <person name="Shinn P."/>
            <person name="Palm C.J."/>
            <person name="Southwick A.M."/>
            <person name="Wu H.C."/>
            <person name="Kim C.J."/>
            <person name="Nguyen M."/>
            <person name="Pham P.K."/>
            <person name="Cheuk R.F."/>
            <person name="Karlin-Newmann G."/>
            <person name="Liu S.X."/>
            <person name="Lam B."/>
            <person name="Sakano H."/>
            <person name="Wu T."/>
            <person name="Yu G."/>
            <person name="Miranda M."/>
            <person name="Quach H.L."/>
            <person name="Tripp M."/>
            <person name="Chang C.H."/>
            <person name="Lee J.M."/>
            <person name="Toriumi M.J."/>
            <person name="Chan M.M."/>
            <person name="Tang C.C."/>
            <person name="Onodera C.S."/>
            <person name="Deng J.M."/>
            <person name="Akiyama K."/>
            <person name="Ansari Y."/>
            <person name="Arakawa T."/>
            <person name="Banh J."/>
            <person name="Banno F."/>
            <person name="Bowser L."/>
            <person name="Brooks S.Y."/>
            <person name="Carninci P."/>
            <person name="Chao Q."/>
            <person name="Choy N."/>
            <person name="Enju A."/>
            <person name="Goldsmith A.D."/>
            <person name="Gurjal M."/>
            <person name="Hansen N.F."/>
            <person name="Hayashizaki Y."/>
            <person name="Johnson-Hopson C."/>
            <person name="Hsuan V.W."/>
            <person name="Iida K."/>
            <person name="Karnes M."/>
            <person name="Khan S."/>
            <person name="Koesema E."/>
            <person name="Ishida J."/>
            <person name="Jiang P.X."/>
            <person name="Jones T."/>
            <person name="Kawai J."/>
            <person name="Kamiya A."/>
            <person name="Meyers C."/>
            <person name="Nakajima M."/>
            <person name="Narusaka M."/>
            <person name="Seki M."/>
            <person name="Sakurai T."/>
            <person name="Satou M."/>
            <person name="Tamse R."/>
            <person name="Vaysberg M."/>
            <person name="Wallender E.K."/>
            <person name="Wong C."/>
            <person name="Yamamura Y."/>
            <person name="Yuan S."/>
            <person name="Shinozaki K."/>
            <person name="Davis R.W."/>
            <person name="Theologis A."/>
            <person name="Ecker J.R."/>
        </authorList>
    </citation>
    <scope>NUCLEOTIDE SEQUENCE [LARGE SCALE MRNA]</scope>
    <source>
        <strain>cv. Columbia</strain>
    </source>
</reference>
<reference key="5">
    <citation type="submission" date="2002-03" db="EMBL/GenBank/DDBJ databases">
        <title>Full-length cDNA from Arabidopsis thaliana.</title>
        <authorList>
            <person name="Brover V.V."/>
            <person name="Troukhan M.E."/>
            <person name="Alexandrov N.A."/>
            <person name="Lu Y.-P."/>
            <person name="Flavell R.B."/>
            <person name="Feldmann K.A."/>
        </authorList>
    </citation>
    <scope>NUCLEOTIDE SEQUENCE [LARGE SCALE MRNA]</scope>
</reference>
<reference key="6">
    <citation type="journal article" date="2013" name="Plant Mol. Biol.">
        <title>Coexpression patterns indicate that GPI-anchored non-specific lipid transfer proteins are involved in accumulation of cuticular wax, suberin and sporopollenin.</title>
        <authorList>
            <person name="Edstam M.M."/>
            <person name="Blomqvist K."/>
            <person name="Ekloef A."/>
            <person name="Wennergren U."/>
            <person name="Edqvist J."/>
        </authorList>
    </citation>
    <scope>TISSUE SPECIFICITY</scope>
    <scope>GENE FAMILY</scope>
    <scope>NOMENCLATURE</scope>
    <source>
        <strain>cv. Columbia</strain>
    </source>
</reference>
<gene>
    <name evidence="9" type="primary">LTPG15</name>
    <name evidence="8" type="synonym">XYLP11</name>
    <name evidence="8" type="synonym">XYP7</name>
    <name evidence="11" type="ordered locus">At2g48130</name>
    <name evidence="12" type="ORF">F11L15.3</name>
</gene>
<feature type="signal peptide" evidence="3">
    <location>
        <begin position="1"/>
        <end position="24"/>
    </location>
</feature>
<feature type="chain" id="PRO_5015098699" description="Non-specific lipid transfer protein GPI-anchored 15">
    <location>
        <begin position="25"/>
        <end position="158"/>
    </location>
</feature>
<feature type="propeptide" id="PRO_0000451646" description="Removed in mature form" evidence="3">
    <location>
        <begin position="159"/>
        <end position="183"/>
    </location>
</feature>
<feature type="region of interest" description="Disordered" evidence="5">
    <location>
        <begin position="108"/>
        <end position="158"/>
    </location>
</feature>
<feature type="compositionally biased region" description="Polar residues" evidence="5">
    <location>
        <begin position="149"/>
        <end position="158"/>
    </location>
</feature>
<feature type="lipid moiety-binding region" description="GPI-anchor amidated serine" evidence="3">
    <location>
        <position position="158"/>
    </location>
</feature>
<feature type="glycosylation site" description="N-linked (GlcNAc...) asparagine" evidence="4">
    <location>
        <position position="47"/>
    </location>
</feature>
<feature type="glycosylation site" description="N-linked (GlcNAc...) asparagine" evidence="4">
    <location>
        <position position="86"/>
    </location>
</feature>
<feature type="disulfide bond" evidence="1">
    <location>
        <begin position="30"/>
        <end position="71"/>
    </location>
</feature>
<feature type="disulfide bond" evidence="1">
    <location>
        <begin position="40"/>
        <end position="55"/>
    </location>
</feature>
<feature type="disulfide bond" evidence="1">
    <location>
        <begin position="56"/>
        <end position="97"/>
    </location>
</feature>
<feature type="disulfide bond" evidence="1">
    <location>
        <begin position="69"/>
        <end position="107"/>
    </location>
</feature>
<feature type="sequence conflict" description="In Ref. 5; AAM64723." evidence="10" ref="5">
    <original>T</original>
    <variation>N</variation>
    <location>
        <position position="155"/>
    </location>
</feature>